<organism>
    <name type="scientific">Frankia casuarinae (strain DSM 45818 / CECT 9043 / HFP020203 / CcI3)</name>
    <dbReference type="NCBI Taxonomy" id="106370"/>
    <lineage>
        <taxon>Bacteria</taxon>
        <taxon>Bacillati</taxon>
        <taxon>Actinomycetota</taxon>
        <taxon>Actinomycetes</taxon>
        <taxon>Frankiales</taxon>
        <taxon>Frankiaceae</taxon>
        <taxon>Frankia</taxon>
    </lineage>
</organism>
<name>RL32_FRACC</name>
<protein>
    <recommendedName>
        <fullName evidence="1">Large ribosomal subunit protein bL32</fullName>
    </recommendedName>
    <alternativeName>
        <fullName evidence="3">50S ribosomal protein L32</fullName>
    </alternativeName>
</protein>
<comment type="similarity">
    <text evidence="1">Belongs to the bacterial ribosomal protein bL32 family.</text>
</comment>
<keyword id="KW-1185">Reference proteome</keyword>
<keyword id="KW-0687">Ribonucleoprotein</keyword>
<keyword id="KW-0689">Ribosomal protein</keyword>
<feature type="chain" id="PRO_0000296469" description="Large ribosomal subunit protein bL32">
    <location>
        <begin position="1"/>
        <end position="56"/>
    </location>
</feature>
<feature type="region of interest" description="Disordered" evidence="2">
    <location>
        <begin position="1"/>
        <end position="24"/>
    </location>
</feature>
<feature type="compositionally biased region" description="Basic residues" evidence="2">
    <location>
        <begin position="1"/>
        <end position="20"/>
    </location>
</feature>
<sequence length="56" mass="6422">MAVPKRRTSRSNTRSRRSQWKAKVPTLAKCSRGHVIRPHTVCGTCGRYNDRQVLDV</sequence>
<accession>Q2J6Y7</accession>
<evidence type="ECO:0000255" key="1">
    <source>
        <dbReference type="HAMAP-Rule" id="MF_00340"/>
    </source>
</evidence>
<evidence type="ECO:0000256" key="2">
    <source>
        <dbReference type="SAM" id="MobiDB-lite"/>
    </source>
</evidence>
<evidence type="ECO:0000305" key="3"/>
<proteinExistence type="inferred from homology"/>
<dbReference type="EMBL" id="CP000249">
    <property type="protein sequence ID" value="ABD12955.1"/>
    <property type="molecule type" value="Genomic_DNA"/>
</dbReference>
<dbReference type="RefSeq" id="WP_011437979.1">
    <property type="nucleotide sequence ID" value="NZ_LRTJ01000033.1"/>
</dbReference>
<dbReference type="SMR" id="Q2J6Y7"/>
<dbReference type="STRING" id="106370.Francci3_3603"/>
<dbReference type="KEGG" id="fra:Francci3_3603"/>
<dbReference type="eggNOG" id="COG0333">
    <property type="taxonomic scope" value="Bacteria"/>
</dbReference>
<dbReference type="HOGENOM" id="CLU_129084_1_1_11"/>
<dbReference type="OrthoDB" id="9807363at2"/>
<dbReference type="Proteomes" id="UP000001937">
    <property type="component" value="Chromosome"/>
</dbReference>
<dbReference type="GO" id="GO:0015934">
    <property type="term" value="C:large ribosomal subunit"/>
    <property type="evidence" value="ECO:0007669"/>
    <property type="project" value="InterPro"/>
</dbReference>
<dbReference type="GO" id="GO:0003735">
    <property type="term" value="F:structural constituent of ribosome"/>
    <property type="evidence" value="ECO:0007669"/>
    <property type="project" value="InterPro"/>
</dbReference>
<dbReference type="GO" id="GO:0006412">
    <property type="term" value="P:translation"/>
    <property type="evidence" value="ECO:0007669"/>
    <property type="project" value="UniProtKB-UniRule"/>
</dbReference>
<dbReference type="HAMAP" id="MF_00340">
    <property type="entry name" value="Ribosomal_bL32"/>
    <property type="match status" value="1"/>
</dbReference>
<dbReference type="InterPro" id="IPR002677">
    <property type="entry name" value="Ribosomal_bL32"/>
</dbReference>
<dbReference type="InterPro" id="IPR044957">
    <property type="entry name" value="Ribosomal_bL32_bact"/>
</dbReference>
<dbReference type="InterPro" id="IPR011332">
    <property type="entry name" value="Ribosomal_zn-bd"/>
</dbReference>
<dbReference type="NCBIfam" id="TIGR01031">
    <property type="entry name" value="rpmF_bact"/>
    <property type="match status" value="1"/>
</dbReference>
<dbReference type="PANTHER" id="PTHR35534">
    <property type="entry name" value="50S RIBOSOMAL PROTEIN L32"/>
    <property type="match status" value="1"/>
</dbReference>
<dbReference type="PANTHER" id="PTHR35534:SF1">
    <property type="entry name" value="LARGE RIBOSOMAL SUBUNIT PROTEIN BL32"/>
    <property type="match status" value="1"/>
</dbReference>
<dbReference type="Pfam" id="PF01783">
    <property type="entry name" value="Ribosomal_L32p"/>
    <property type="match status" value="1"/>
</dbReference>
<dbReference type="SUPFAM" id="SSF57829">
    <property type="entry name" value="Zn-binding ribosomal proteins"/>
    <property type="match status" value="1"/>
</dbReference>
<gene>
    <name evidence="1" type="primary">rpmF</name>
    <name type="ordered locus">Francci3_3603</name>
</gene>
<reference key="1">
    <citation type="journal article" date="2007" name="Genome Res.">
        <title>Genome characteristics of facultatively symbiotic Frankia sp. strains reflect host range and host plant biogeography.</title>
        <authorList>
            <person name="Normand P."/>
            <person name="Lapierre P."/>
            <person name="Tisa L.S."/>
            <person name="Gogarten J.P."/>
            <person name="Alloisio N."/>
            <person name="Bagnarol E."/>
            <person name="Bassi C.A."/>
            <person name="Berry A.M."/>
            <person name="Bickhart D.M."/>
            <person name="Choisne N."/>
            <person name="Couloux A."/>
            <person name="Cournoyer B."/>
            <person name="Cruveiller S."/>
            <person name="Daubin V."/>
            <person name="Demange N."/>
            <person name="Francino M.P."/>
            <person name="Goltsman E."/>
            <person name="Huang Y."/>
            <person name="Kopp O.R."/>
            <person name="Labarre L."/>
            <person name="Lapidus A."/>
            <person name="Lavire C."/>
            <person name="Marechal J."/>
            <person name="Martinez M."/>
            <person name="Mastronunzio J.E."/>
            <person name="Mullin B.C."/>
            <person name="Niemann J."/>
            <person name="Pujic P."/>
            <person name="Rawnsley T."/>
            <person name="Rouy Z."/>
            <person name="Schenowitz C."/>
            <person name="Sellstedt A."/>
            <person name="Tavares F."/>
            <person name="Tomkins J.P."/>
            <person name="Vallenet D."/>
            <person name="Valverde C."/>
            <person name="Wall L.G."/>
            <person name="Wang Y."/>
            <person name="Medigue C."/>
            <person name="Benson D.R."/>
        </authorList>
    </citation>
    <scope>NUCLEOTIDE SEQUENCE [LARGE SCALE GENOMIC DNA]</scope>
    <source>
        <strain>DSM 45818 / CECT 9043 / HFP020203 / CcI3</strain>
    </source>
</reference>